<evidence type="ECO:0000255" key="1">
    <source>
        <dbReference type="HAMAP-Rule" id="MF_00130"/>
    </source>
</evidence>
<evidence type="ECO:0000256" key="2">
    <source>
        <dbReference type="SAM" id="MobiDB-lite"/>
    </source>
</evidence>
<dbReference type="EC" id="3.1.21.10" evidence="1"/>
<dbReference type="EMBL" id="CP001175">
    <property type="protein sequence ID" value="ACK39021.1"/>
    <property type="molecule type" value="Genomic_DNA"/>
</dbReference>
<dbReference type="RefSeq" id="WP_003730451.1">
    <property type="nucleotide sequence ID" value="NC_011660.1"/>
</dbReference>
<dbReference type="SMR" id="B8DDL2"/>
<dbReference type="KEGG" id="lmh:LMHCC_0666"/>
<dbReference type="HOGENOM" id="CLU_096340_0_0_9"/>
<dbReference type="GO" id="GO:0005737">
    <property type="term" value="C:cytoplasm"/>
    <property type="evidence" value="ECO:0007669"/>
    <property type="project" value="UniProtKB-SubCell"/>
</dbReference>
<dbReference type="GO" id="GO:0004519">
    <property type="term" value="F:endonuclease activity"/>
    <property type="evidence" value="ECO:0007669"/>
    <property type="project" value="UniProtKB-UniRule"/>
</dbReference>
<dbReference type="GO" id="GO:0000287">
    <property type="term" value="F:magnesium ion binding"/>
    <property type="evidence" value="ECO:0007669"/>
    <property type="project" value="UniProtKB-UniRule"/>
</dbReference>
<dbReference type="GO" id="GO:0003676">
    <property type="term" value="F:nucleic acid binding"/>
    <property type="evidence" value="ECO:0007669"/>
    <property type="project" value="InterPro"/>
</dbReference>
<dbReference type="GO" id="GO:0007059">
    <property type="term" value="P:chromosome segregation"/>
    <property type="evidence" value="ECO:0007669"/>
    <property type="project" value="UniProtKB-UniRule"/>
</dbReference>
<dbReference type="GO" id="GO:0006310">
    <property type="term" value="P:DNA recombination"/>
    <property type="evidence" value="ECO:0007669"/>
    <property type="project" value="UniProtKB-UniRule"/>
</dbReference>
<dbReference type="GO" id="GO:0006281">
    <property type="term" value="P:DNA repair"/>
    <property type="evidence" value="ECO:0007669"/>
    <property type="project" value="UniProtKB-UniRule"/>
</dbReference>
<dbReference type="CDD" id="cd22354">
    <property type="entry name" value="RecU-like"/>
    <property type="match status" value="1"/>
</dbReference>
<dbReference type="Gene3D" id="3.40.1350.10">
    <property type="match status" value="1"/>
</dbReference>
<dbReference type="HAMAP" id="MF_00130">
    <property type="entry name" value="RecU"/>
    <property type="match status" value="1"/>
</dbReference>
<dbReference type="InterPro" id="IPR004612">
    <property type="entry name" value="Resolv_RecU"/>
</dbReference>
<dbReference type="InterPro" id="IPR011335">
    <property type="entry name" value="Restrct_endonuc-II-like"/>
</dbReference>
<dbReference type="InterPro" id="IPR011856">
    <property type="entry name" value="tRNA_endonuc-like_dom_sf"/>
</dbReference>
<dbReference type="NCBIfam" id="NF002582">
    <property type="entry name" value="PRK02234.1-3"/>
    <property type="match status" value="1"/>
</dbReference>
<dbReference type="NCBIfam" id="NF002584">
    <property type="entry name" value="PRK02234.1-5"/>
    <property type="match status" value="1"/>
</dbReference>
<dbReference type="NCBIfam" id="TIGR00648">
    <property type="entry name" value="recU"/>
    <property type="match status" value="1"/>
</dbReference>
<dbReference type="Pfam" id="PF03838">
    <property type="entry name" value="RecU"/>
    <property type="match status" value="1"/>
</dbReference>
<dbReference type="PIRSF" id="PIRSF037785">
    <property type="entry name" value="RecU"/>
    <property type="match status" value="1"/>
</dbReference>
<dbReference type="SUPFAM" id="SSF52980">
    <property type="entry name" value="Restriction endonuclease-like"/>
    <property type="match status" value="1"/>
</dbReference>
<keyword id="KW-0963">Cytoplasm</keyword>
<keyword id="KW-0227">DNA damage</keyword>
<keyword id="KW-0233">DNA recombination</keyword>
<keyword id="KW-0234">DNA repair</keyword>
<keyword id="KW-0255">Endonuclease</keyword>
<keyword id="KW-0378">Hydrolase</keyword>
<keyword id="KW-0460">Magnesium</keyword>
<keyword id="KW-0479">Metal-binding</keyword>
<keyword id="KW-0540">Nuclease</keyword>
<feature type="chain" id="PRO_1000193439" description="Holliday junction resolvase RecU">
    <location>
        <begin position="1"/>
        <end position="201"/>
    </location>
</feature>
<feature type="region of interest" description="Disordered" evidence="2">
    <location>
        <begin position="1"/>
        <end position="26"/>
    </location>
</feature>
<feature type="binding site" evidence="1">
    <location>
        <position position="87"/>
    </location>
    <ligand>
        <name>Mg(2+)</name>
        <dbReference type="ChEBI" id="CHEBI:18420"/>
    </ligand>
</feature>
<feature type="binding site" evidence="1">
    <location>
        <position position="89"/>
    </location>
    <ligand>
        <name>Mg(2+)</name>
        <dbReference type="ChEBI" id="CHEBI:18420"/>
    </ligand>
</feature>
<feature type="binding site" evidence="1">
    <location>
        <position position="102"/>
    </location>
    <ligand>
        <name>Mg(2+)</name>
        <dbReference type="ChEBI" id="CHEBI:18420"/>
    </ligand>
</feature>
<feature type="binding site" evidence="1">
    <location>
        <position position="121"/>
    </location>
    <ligand>
        <name>Mg(2+)</name>
        <dbReference type="ChEBI" id="CHEBI:18420"/>
    </ligand>
</feature>
<feature type="site" description="Transition state stabilizer" evidence="1">
    <location>
        <position position="104"/>
    </location>
</feature>
<name>RECU_LISMH</name>
<comment type="function">
    <text evidence="1">Endonuclease that resolves Holliday junction intermediates in genetic recombination. Cleaves mobile four-strand junctions by introducing symmetrical nicks in paired strands. Promotes annealing of linear ssDNA with homologous dsDNA. Required for DNA repair, homologous recombination and chromosome segregation.</text>
</comment>
<comment type="catalytic activity">
    <reaction evidence="1">
        <text>Endonucleolytic cleavage at a junction such as a reciprocal single-stranded crossover between two homologous DNA duplexes (Holliday junction).</text>
        <dbReference type="EC" id="3.1.21.10"/>
    </reaction>
</comment>
<comment type="cofactor">
    <cofactor evidence="1">
        <name>Mg(2+)</name>
        <dbReference type="ChEBI" id="CHEBI:18420"/>
    </cofactor>
    <text evidence="1">Binds 1 Mg(2+) ion per subunit.</text>
</comment>
<comment type="subcellular location">
    <subcellularLocation>
        <location evidence="1">Cytoplasm</location>
    </subcellularLocation>
</comment>
<comment type="similarity">
    <text evidence="1">Belongs to the RecU family.</text>
</comment>
<proteinExistence type="inferred from homology"/>
<reference key="1">
    <citation type="journal article" date="2011" name="J. Bacteriol.">
        <title>Genome sequence of lineage III Listeria monocytogenes strain HCC23.</title>
        <authorList>
            <person name="Steele C.L."/>
            <person name="Donaldson J.R."/>
            <person name="Paul D."/>
            <person name="Banes M.M."/>
            <person name="Arick T."/>
            <person name="Bridges S.M."/>
            <person name="Lawrence M.L."/>
        </authorList>
    </citation>
    <scope>NUCLEOTIDE SEQUENCE [LARGE SCALE GENOMIC DNA]</scope>
    <source>
        <strain>HCC23</strain>
    </source>
</reference>
<accession>B8DDL2</accession>
<gene>
    <name evidence="1" type="primary">recU</name>
    <name type="ordered locus">LMHCC_0666</name>
</gene>
<sequence>MAIGYPNGKKYAASQEELPQQKRKAPVTYGKRGMSLEDDLNDTIAYYLTHEIAVIHKKPTPVQIVSVDYPKRSSAKIKEAYFKTPSTTDYNGVYKGKYVDFEAKETQNTTSFPLSNFHDHQMTHMANVLKQDGIVFVIIAFQKLGETHFIPFEKFYPFWERMQSGGRKSVTIAEIQDVSDQIPYGLNPRLDFLQSIDKLYF</sequence>
<organism>
    <name type="scientific">Listeria monocytogenes serotype 4a (strain HCC23)</name>
    <dbReference type="NCBI Taxonomy" id="552536"/>
    <lineage>
        <taxon>Bacteria</taxon>
        <taxon>Bacillati</taxon>
        <taxon>Bacillota</taxon>
        <taxon>Bacilli</taxon>
        <taxon>Bacillales</taxon>
        <taxon>Listeriaceae</taxon>
        <taxon>Listeria</taxon>
    </lineage>
</organism>
<protein>
    <recommendedName>
        <fullName evidence="1">Holliday junction resolvase RecU</fullName>
        <ecNumber evidence="1">3.1.21.10</ecNumber>
    </recommendedName>
    <alternativeName>
        <fullName evidence="1">Recombination protein U homolog</fullName>
    </alternativeName>
</protein>